<accession>Q2EET2</accession>
<accession>P77259</accession>
<accession>Q79AR5</accession>
<gene>
    <name evidence="1" type="primary">ypfN</name>
    <name type="ordered locus">b4547</name>
    <name type="ordered locus">JW2457</name>
</gene>
<feature type="chain" id="PRO_0000244542" description="UPF0370 protein YpfN">
    <location>
        <begin position="1"/>
        <end position="66"/>
    </location>
</feature>
<feature type="transmembrane region" description="Helical" evidence="1">
    <location>
        <begin position="4"/>
        <end position="24"/>
    </location>
</feature>
<feature type="region of interest" description="Disordered" evidence="2">
    <location>
        <begin position="39"/>
        <end position="66"/>
    </location>
</feature>
<feature type="compositionally biased region" description="Basic and acidic residues" evidence="2">
    <location>
        <begin position="42"/>
        <end position="51"/>
    </location>
</feature>
<dbReference type="EMBL" id="U00096">
    <property type="protein sequence ID" value="ABD18697.1"/>
    <property type="molecule type" value="Genomic_DNA"/>
</dbReference>
<dbReference type="EMBL" id="AP009048">
    <property type="protein sequence ID" value="BAA16347.1"/>
    <property type="molecule type" value="Genomic_DNA"/>
</dbReference>
<dbReference type="EMBL" id="X57403">
    <property type="protein sequence ID" value="CAA40666.1"/>
    <property type="molecule type" value="Genomic_DNA"/>
</dbReference>
<dbReference type="PIR" id="D42959">
    <property type="entry name" value="D42959"/>
</dbReference>
<dbReference type="RefSeq" id="WP_000383836.1">
    <property type="nucleotide sequence ID" value="NZ_STEB01000051.1"/>
</dbReference>
<dbReference type="RefSeq" id="YP_588465.1">
    <property type="nucleotide sequence ID" value="NC_000913.3"/>
</dbReference>
<dbReference type="SMR" id="Q2EET2"/>
<dbReference type="BioGRID" id="4259469">
    <property type="interactions" value="6"/>
</dbReference>
<dbReference type="FunCoup" id="Q2EET2">
    <property type="interactions" value="84"/>
</dbReference>
<dbReference type="STRING" id="511145.b4547"/>
<dbReference type="jPOST" id="Q2EET2"/>
<dbReference type="PaxDb" id="511145-b4547"/>
<dbReference type="EnsemblBacteria" id="ABD18697">
    <property type="protein sequence ID" value="ABD18697"/>
    <property type="gene ID" value="b4547"/>
</dbReference>
<dbReference type="GeneID" id="1450286"/>
<dbReference type="KEGG" id="ecj:JW2457"/>
<dbReference type="KEGG" id="eco:b4547"/>
<dbReference type="KEGG" id="ecoc:C3026_13720"/>
<dbReference type="PATRIC" id="fig|511145.12.peg.2567"/>
<dbReference type="eggNOG" id="ENOG5032YJI">
    <property type="taxonomic scope" value="Bacteria"/>
</dbReference>
<dbReference type="HOGENOM" id="CLU_198936_0_0_6"/>
<dbReference type="InParanoid" id="Q2EET2"/>
<dbReference type="OMA" id="DDWPQKK"/>
<dbReference type="PhylomeDB" id="Q2EET2"/>
<dbReference type="BioCyc" id="EcoCyc:MONOMER0-2685"/>
<dbReference type="PRO" id="PR:Q2EET2"/>
<dbReference type="Proteomes" id="UP000000625">
    <property type="component" value="Chromosome"/>
</dbReference>
<dbReference type="GO" id="GO:0005886">
    <property type="term" value="C:plasma membrane"/>
    <property type="evidence" value="ECO:0007669"/>
    <property type="project" value="UniProtKB-SubCell"/>
</dbReference>
<dbReference type="HAMAP" id="MF_01566">
    <property type="entry name" value="UPF0370"/>
    <property type="match status" value="1"/>
</dbReference>
<dbReference type="InterPro" id="IPR020910">
    <property type="entry name" value="UPF0370"/>
</dbReference>
<dbReference type="NCBIfam" id="NF010185">
    <property type="entry name" value="PRK13664.1"/>
    <property type="match status" value="1"/>
</dbReference>
<dbReference type="Pfam" id="PF13980">
    <property type="entry name" value="UPF0370"/>
    <property type="match status" value="1"/>
</dbReference>
<comment type="subcellular location">
    <subcellularLocation>
        <location evidence="1">Cell membrane</location>
        <topology evidence="1">Single-pass membrane protein</topology>
    </subcellularLocation>
</comment>
<comment type="similarity">
    <text evidence="1">Belongs to the UPF0370 family.</text>
</comment>
<name>YPFN_ECOLI</name>
<evidence type="ECO:0000255" key="1">
    <source>
        <dbReference type="HAMAP-Rule" id="MF_01566"/>
    </source>
</evidence>
<evidence type="ECO:0000256" key="2">
    <source>
        <dbReference type="SAM" id="MobiDB-lite"/>
    </source>
</evidence>
<organism>
    <name type="scientific">Escherichia coli (strain K12)</name>
    <dbReference type="NCBI Taxonomy" id="83333"/>
    <lineage>
        <taxon>Bacteria</taxon>
        <taxon>Pseudomonadati</taxon>
        <taxon>Pseudomonadota</taxon>
        <taxon>Gammaproteobacteria</taxon>
        <taxon>Enterobacterales</taxon>
        <taxon>Enterobacteriaceae</taxon>
        <taxon>Escherichia</taxon>
    </lineage>
</organism>
<reference key="1">
    <citation type="journal article" date="1997" name="Science">
        <title>The complete genome sequence of Escherichia coli K-12.</title>
        <authorList>
            <person name="Blattner F.R."/>
            <person name="Plunkett G. III"/>
            <person name="Bloch C.A."/>
            <person name="Perna N.T."/>
            <person name="Burland V."/>
            <person name="Riley M."/>
            <person name="Collado-Vides J."/>
            <person name="Glasner J.D."/>
            <person name="Rode C.K."/>
            <person name="Mayhew G.F."/>
            <person name="Gregor J."/>
            <person name="Davis N.W."/>
            <person name="Kirkpatrick H.A."/>
            <person name="Goeden M.A."/>
            <person name="Rose D.J."/>
            <person name="Mau B."/>
            <person name="Shao Y."/>
        </authorList>
    </citation>
    <scope>NUCLEOTIDE SEQUENCE [LARGE SCALE GENOMIC DNA]</scope>
    <source>
        <strain>K12 / MG1655 / ATCC 47076</strain>
    </source>
</reference>
<reference key="2">
    <citation type="journal article" date="2006" name="Mol. Syst. Biol.">
        <title>Highly accurate genome sequences of Escherichia coli K-12 strains MG1655 and W3110.</title>
        <authorList>
            <person name="Hayashi K."/>
            <person name="Morooka N."/>
            <person name="Yamamoto Y."/>
            <person name="Fujita K."/>
            <person name="Isono K."/>
            <person name="Choi S."/>
            <person name="Ohtsubo E."/>
            <person name="Baba T."/>
            <person name="Wanner B.L."/>
            <person name="Mori H."/>
            <person name="Horiuchi T."/>
        </authorList>
    </citation>
    <scope>NUCLEOTIDE SEQUENCE [LARGE SCALE GENOMIC DNA]</scope>
    <source>
        <strain>K12 / W3110 / ATCC 27325 / DSM 5911</strain>
    </source>
</reference>
<reference key="3">
    <citation type="journal article" date="1992" name="J. Bacteriol.">
        <title>Cloning, characterization, and expression of the dapE gene of Escherichia coli.</title>
        <authorList>
            <person name="Bouvier J."/>
            <person name="Richaud C."/>
            <person name="Higgins W."/>
            <person name="Bogler O."/>
            <person name="Stragier S."/>
        </authorList>
    </citation>
    <scope>NUCLEOTIDE SEQUENCE [GENOMIC DNA] OF 1-31</scope>
    <source>
        <strain>K12</strain>
    </source>
</reference>
<sequence>MDWLAKYWWILVIVFLVGVLLNVIKDLKRVDHKKFLANKPELPPHRDFNDKWDDDDDWPKKDQPKK</sequence>
<protein>
    <recommendedName>
        <fullName evidence="1">UPF0370 protein YpfN</fullName>
    </recommendedName>
</protein>
<proteinExistence type="inferred from homology"/>
<keyword id="KW-1003">Cell membrane</keyword>
<keyword id="KW-0472">Membrane</keyword>
<keyword id="KW-1185">Reference proteome</keyword>
<keyword id="KW-0812">Transmembrane</keyword>
<keyword id="KW-1133">Transmembrane helix</keyword>